<feature type="chain" id="PRO_0000277847" description="Antagonist of mitotic exit network protein 1">
    <location>
        <begin position="1"/>
        <end position="717"/>
    </location>
</feature>
<feature type="region of interest" description="Disordered" evidence="3">
    <location>
        <begin position="1"/>
        <end position="149"/>
    </location>
</feature>
<feature type="region of interest" description="Disordered" evidence="3">
    <location>
        <begin position="697"/>
        <end position="717"/>
    </location>
</feature>
<feature type="compositionally biased region" description="Polar residues" evidence="3">
    <location>
        <begin position="1"/>
        <end position="26"/>
    </location>
</feature>
<feature type="compositionally biased region" description="Low complexity" evidence="3">
    <location>
        <begin position="38"/>
        <end position="74"/>
    </location>
</feature>
<feature type="compositionally biased region" description="Basic and acidic residues" evidence="3">
    <location>
        <begin position="90"/>
        <end position="104"/>
    </location>
</feature>
<proteinExistence type="inferred from homology"/>
<reference key="1">
    <citation type="journal article" date="2004" name="Nature">
        <title>Genome evolution in yeasts.</title>
        <authorList>
            <person name="Dujon B."/>
            <person name="Sherman D."/>
            <person name="Fischer G."/>
            <person name="Durrens P."/>
            <person name="Casaregola S."/>
            <person name="Lafontaine I."/>
            <person name="de Montigny J."/>
            <person name="Marck C."/>
            <person name="Neuveglise C."/>
            <person name="Talla E."/>
            <person name="Goffard N."/>
            <person name="Frangeul L."/>
            <person name="Aigle M."/>
            <person name="Anthouard V."/>
            <person name="Babour A."/>
            <person name="Barbe V."/>
            <person name="Barnay S."/>
            <person name="Blanchin S."/>
            <person name="Beckerich J.-M."/>
            <person name="Beyne E."/>
            <person name="Bleykasten C."/>
            <person name="Boisrame A."/>
            <person name="Boyer J."/>
            <person name="Cattolico L."/>
            <person name="Confanioleri F."/>
            <person name="de Daruvar A."/>
            <person name="Despons L."/>
            <person name="Fabre E."/>
            <person name="Fairhead C."/>
            <person name="Ferry-Dumazet H."/>
            <person name="Groppi A."/>
            <person name="Hantraye F."/>
            <person name="Hennequin C."/>
            <person name="Jauniaux N."/>
            <person name="Joyet P."/>
            <person name="Kachouri R."/>
            <person name="Kerrest A."/>
            <person name="Koszul R."/>
            <person name="Lemaire M."/>
            <person name="Lesur I."/>
            <person name="Ma L."/>
            <person name="Muller H."/>
            <person name="Nicaud J.-M."/>
            <person name="Nikolski M."/>
            <person name="Oztas S."/>
            <person name="Ozier-Kalogeropoulos O."/>
            <person name="Pellenz S."/>
            <person name="Potier S."/>
            <person name="Richard G.-F."/>
            <person name="Straub M.-L."/>
            <person name="Suleau A."/>
            <person name="Swennen D."/>
            <person name="Tekaia F."/>
            <person name="Wesolowski-Louvel M."/>
            <person name="Westhof E."/>
            <person name="Wirth B."/>
            <person name="Zeniou-Meyer M."/>
            <person name="Zivanovic Y."/>
            <person name="Bolotin-Fukuhara M."/>
            <person name="Thierry A."/>
            <person name="Bouchier C."/>
            <person name="Caudron B."/>
            <person name="Scarpelli C."/>
            <person name="Gaillardin C."/>
            <person name="Weissenbach J."/>
            <person name="Wincker P."/>
            <person name="Souciet J.-L."/>
        </authorList>
    </citation>
    <scope>NUCLEOTIDE SEQUENCE [LARGE SCALE GENOMIC DNA]</scope>
    <source>
        <strain>CLIB 122 / E 150</strain>
    </source>
</reference>
<comment type="function">
    <text evidence="1">Negative regulator of the mitotic exit network (MEN), required for multiple cell cycle checkpoints. Required for daughter cell separation and chromosome stability. Involved in copper sensitivity.</text>
</comment>
<comment type="subcellular location">
    <subcellularLocation>
        <location evidence="2">Cytoplasm</location>
    </subcellularLocation>
    <subcellularLocation>
        <location evidence="2">Nucleus</location>
    </subcellularLocation>
</comment>
<comment type="similarity">
    <text evidence="4">Belongs to the AMN1 family.</text>
</comment>
<name>AMN1_YARLI</name>
<protein>
    <recommendedName>
        <fullName>Antagonist of mitotic exit network protein 1</fullName>
    </recommendedName>
</protein>
<evidence type="ECO:0000250" key="1"/>
<evidence type="ECO:0000250" key="2">
    <source>
        <dbReference type="UniProtKB" id="P38285"/>
    </source>
</evidence>
<evidence type="ECO:0000256" key="3">
    <source>
        <dbReference type="SAM" id="MobiDB-lite"/>
    </source>
</evidence>
<evidence type="ECO:0000305" key="4"/>
<accession>Q6C725</accession>
<sequence>MQPSTPKRSKGDWSTTQQRRSYSTPSALIFGSPEDTPASSSSFASSSSTGTTPNTSPQRPSQLPKSPSSPTPSRRGLRGKLASLTLGAAERVRSISGRIDDREPPVYAPPAQPLANPQESLMGWMVERNNGGTRPQQRHPPPRLDTSNYGVSAISNNGLLTPEQTPESSPIQPIHRAKGRTTSYYQTQPFKYTSSLREDPFIDRNRNRIKEVQELDFEEFNNSEDDFCLSETDVHSEFSSSADSTSSQCHKALRIPEILYNILSHVEADVQVPHEPPPQRRRPLSLRHAFLIYGDREKAHQAWERALKEEQTPTQQMFKGDGALHGCLLVNKFWFEVSRKLLYNKLHFCDSQKWRQFVHMSSDTGSPEDLITWSRSSHHRSLSRSTGQPNLHQLANGEAEMNDYFDTPTKLFVLHKISNAQQSEIDLLQHKIGGALEWLEFYTCAAIVPPLGLLAGGSLQKIVLPGCTKVDDAFLKLVAENCPRLQIADLRACEKVSNEGLVALAGKCPQLKLLNVGRTQMGHLISYRGISAIARKTQVNTLGAAGCFVCDKSMWELAWYRGHSLDRLSLNGCTLLTNDSIPRILPYTSNLAVLELRGCTQITDFKSIIKFKRYQERHKREPLIEGCEIFESRMREAEFQLEMDISREILRDCVQWIYAPDHDQESVRVKRKKVVPNFASTSRLSFIPHGSDAARKLAATSTRVESSSRHHSSRPSH</sequence>
<gene>
    <name type="primary">AMN1</name>
    <name type="ordered locus">YALI0E04356g</name>
</gene>
<organism>
    <name type="scientific">Yarrowia lipolytica (strain CLIB 122 / E 150)</name>
    <name type="common">Yeast</name>
    <name type="synonym">Candida lipolytica</name>
    <dbReference type="NCBI Taxonomy" id="284591"/>
    <lineage>
        <taxon>Eukaryota</taxon>
        <taxon>Fungi</taxon>
        <taxon>Dikarya</taxon>
        <taxon>Ascomycota</taxon>
        <taxon>Saccharomycotina</taxon>
        <taxon>Dipodascomycetes</taxon>
        <taxon>Dipodascales</taxon>
        <taxon>Dipodascales incertae sedis</taxon>
        <taxon>Yarrowia</taxon>
    </lineage>
</organism>
<keyword id="KW-0131">Cell cycle</keyword>
<keyword id="KW-0132">Cell division</keyword>
<keyword id="KW-0963">Cytoplasm</keyword>
<keyword id="KW-0498">Mitosis</keyword>
<keyword id="KW-0539">Nucleus</keyword>
<keyword id="KW-1185">Reference proteome</keyword>
<dbReference type="EMBL" id="CR382131">
    <property type="protein sequence ID" value="CAG79118.1"/>
    <property type="molecule type" value="Genomic_DNA"/>
</dbReference>
<dbReference type="RefSeq" id="XP_503537.1">
    <property type="nucleotide sequence ID" value="XM_503537.1"/>
</dbReference>
<dbReference type="SMR" id="Q6C725"/>
<dbReference type="FunCoup" id="Q6C725">
    <property type="interactions" value="93"/>
</dbReference>
<dbReference type="STRING" id="284591.Q6C725"/>
<dbReference type="EnsemblFungi" id="CAG79118">
    <property type="protein sequence ID" value="CAG79118"/>
    <property type="gene ID" value="YALI0_E04356g"/>
</dbReference>
<dbReference type="KEGG" id="yli:2912194"/>
<dbReference type="VEuPathDB" id="FungiDB:YALI0_E04356g"/>
<dbReference type="HOGENOM" id="CLU_385528_0_0_1"/>
<dbReference type="InParanoid" id="Q6C725"/>
<dbReference type="OrthoDB" id="1856at4891"/>
<dbReference type="Proteomes" id="UP000001300">
    <property type="component" value="Chromosome E"/>
</dbReference>
<dbReference type="GO" id="GO:0005737">
    <property type="term" value="C:cytoplasm"/>
    <property type="evidence" value="ECO:0007669"/>
    <property type="project" value="UniProtKB-SubCell"/>
</dbReference>
<dbReference type="GO" id="GO:0005634">
    <property type="term" value="C:nucleus"/>
    <property type="evidence" value="ECO:0007669"/>
    <property type="project" value="UniProtKB-SubCell"/>
</dbReference>
<dbReference type="GO" id="GO:0019005">
    <property type="term" value="C:SCF ubiquitin ligase complex"/>
    <property type="evidence" value="ECO:0000318"/>
    <property type="project" value="GO_Central"/>
</dbReference>
<dbReference type="GO" id="GO:0051301">
    <property type="term" value="P:cell division"/>
    <property type="evidence" value="ECO:0007669"/>
    <property type="project" value="UniProtKB-KW"/>
</dbReference>
<dbReference type="GO" id="GO:0031146">
    <property type="term" value="P:SCF-dependent proteasomal ubiquitin-dependent protein catabolic process"/>
    <property type="evidence" value="ECO:0000318"/>
    <property type="project" value="GO_Central"/>
</dbReference>
<dbReference type="CDD" id="cd09293">
    <property type="entry name" value="AMN1"/>
    <property type="match status" value="1"/>
</dbReference>
<dbReference type="FunFam" id="3.80.10.10:FF:001225">
    <property type="entry name" value="Antagonist of mitotic exit network protein 1"/>
    <property type="match status" value="1"/>
</dbReference>
<dbReference type="Gene3D" id="3.80.10.10">
    <property type="entry name" value="Ribonuclease Inhibitor"/>
    <property type="match status" value="2"/>
</dbReference>
<dbReference type="InterPro" id="IPR006553">
    <property type="entry name" value="Leu-rich_rpt_Cys-con_subtyp"/>
</dbReference>
<dbReference type="InterPro" id="IPR032675">
    <property type="entry name" value="LRR_dom_sf"/>
</dbReference>
<dbReference type="PANTHER" id="PTHR13318:SF95">
    <property type="entry name" value="F-BOX PROTEIN YLR352W"/>
    <property type="match status" value="1"/>
</dbReference>
<dbReference type="PANTHER" id="PTHR13318">
    <property type="entry name" value="PARTNER OF PAIRED, ISOFORM B-RELATED"/>
    <property type="match status" value="1"/>
</dbReference>
<dbReference type="SMART" id="SM00367">
    <property type="entry name" value="LRR_CC"/>
    <property type="match status" value="5"/>
</dbReference>
<dbReference type="SUPFAM" id="SSF52047">
    <property type="entry name" value="RNI-like"/>
    <property type="match status" value="1"/>
</dbReference>